<gene>
    <name evidence="10" type="primary">Or2c1</name>
    <name evidence="10" type="synonym">Mor256-17</name>
    <name evidence="10" type="synonym">Olfr15</name>
</gene>
<dbReference type="EMBL" id="M84005">
    <property type="protein sequence ID" value="AAA39862.1"/>
    <property type="molecule type" value="Genomic_DNA"/>
</dbReference>
<dbReference type="EMBL" id="AY073576">
    <property type="protein sequence ID" value="AAL61239.1"/>
    <property type="molecule type" value="Genomic_DNA"/>
</dbReference>
<dbReference type="EMBL" id="AY317256">
    <property type="protein sequence ID" value="AAP70766.1"/>
    <property type="molecule type" value="Genomic_DNA"/>
</dbReference>
<dbReference type="EMBL" id="BC100680">
    <property type="protein sequence ID" value="AAI00681.1"/>
    <property type="molecule type" value="mRNA"/>
</dbReference>
<dbReference type="EMBL" id="BC100685">
    <property type="protein sequence ID" value="AAI00686.1"/>
    <property type="molecule type" value="mRNA"/>
</dbReference>
<dbReference type="EMBL" id="BC115838">
    <property type="protein sequence ID" value="AAI15839.1"/>
    <property type="molecule type" value="mRNA"/>
</dbReference>
<dbReference type="CCDS" id="CCDS27910.1"/>
<dbReference type="PIR" id="A46247">
    <property type="entry name" value="A46247"/>
</dbReference>
<dbReference type="RefSeq" id="NP_032788.2">
    <property type="nucleotide sequence ID" value="NM_008762.2"/>
</dbReference>
<dbReference type="SMR" id="P23275"/>
<dbReference type="FunCoup" id="P23275">
    <property type="interactions" value="1137"/>
</dbReference>
<dbReference type="STRING" id="10090.ENSMUSP00000150757"/>
<dbReference type="GlyCosmos" id="P23275">
    <property type="glycosylation" value="1 site, No reported glycans"/>
</dbReference>
<dbReference type="GlyGen" id="P23275">
    <property type="glycosylation" value="1 site"/>
</dbReference>
<dbReference type="PhosphoSitePlus" id="P23275"/>
<dbReference type="PaxDb" id="10090-ENSMUSP00000079720"/>
<dbReference type="Antibodypedia" id="24106">
    <property type="antibodies" value="54 antibodies from 16 providers"/>
</dbReference>
<dbReference type="DNASU" id="18312"/>
<dbReference type="Ensembl" id="ENSMUST00000080917.2">
    <property type="protein sequence ID" value="ENSMUSP00000079720.2"/>
    <property type="gene ID" value="ENSMUSG00000059043.3"/>
</dbReference>
<dbReference type="Ensembl" id="ENSMUST00000214238.2">
    <property type="protein sequence ID" value="ENSMUSP00000149504.2"/>
    <property type="gene ID" value="ENSMUSG00000059043.3"/>
</dbReference>
<dbReference type="Ensembl" id="ENSMUST00000214590.2">
    <property type="protein sequence ID" value="ENSMUSP00000150757.2"/>
    <property type="gene ID" value="ENSMUSG00000059043.3"/>
</dbReference>
<dbReference type="GeneID" id="18312"/>
<dbReference type="KEGG" id="mmu:18312"/>
<dbReference type="UCSC" id="uc007xys.1">
    <property type="organism name" value="mouse"/>
</dbReference>
<dbReference type="AGR" id="MGI:106182"/>
<dbReference type="CTD" id="4993"/>
<dbReference type="MGI" id="MGI:106182">
    <property type="gene designation" value="Or2c1"/>
</dbReference>
<dbReference type="VEuPathDB" id="HostDB:ENSMUSG00000059043"/>
<dbReference type="eggNOG" id="ENOG502RCDM">
    <property type="taxonomic scope" value="Eukaryota"/>
</dbReference>
<dbReference type="GeneTree" id="ENSGT01130000278264"/>
<dbReference type="HOGENOM" id="CLU_012526_1_2_1"/>
<dbReference type="InParanoid" id="P23275"/>
<dbReference type="OMA" id="QLEMVFF"/>
<dbReference type="OrthoDB" id="5950740at2759"/>
<dbReference type="PhylomeDB" id="P23275"/>
<dbReference type="TreeFam" id="TF336512"/>
<dbReference type="Reactome" id="R-MMU-381753">
    <property type="pathway name" value="Olfactory Signaling Pathway"/>
</dbReference>
<dbReference type="BioGRID-ORCS" id="18312">
    <property type="hits" value="2 hits in 70 CRISPR screens"/>
</dbReference>
<dbReference type="ChiTaRS" id="Olfr15">
    <property type="organism name" value="mouse"/>
</dbReference>
<dbReference type="PRO" id="PR:P23275"/>
<dbReference type="Proteomes" id="UP000000589">
    <property type="component" value="Chromosome 16"/>
</dbReference>
<dbReference type="RNAct" id="P23275">
    <property type="molecule type" value="protein"/>
</dbReference>
<dbReference type="Bgee" id="ENSMUSG00000059043">
    <property type="expression patterns" value="Expressed in epithelium of nasal septum and 9 other cell types or tissues"/>
</dbReference>
<dbReference type="GO" id="GO:0005938">
    <property type="term" value="C:cell cortex"/>
    <property type="evidence" value="ECO:0000314"/>
    <property type="project" value="MGI"/>
</dbReference>
<dbReference type="GO" id="GO:0005789">
    <property type="term" value="C:endoplasmic reticulum membrane"/>
    <property type="evidence" value="ECO:0000304"/>
    <property type="project" value="Reactome"/>
</dbReference>
<dbReference type="GO" id="GO:0016020">
    <property type="term" value="C:membrane"/>
    <property type="evidence" value="ECO:0000314"/>
    <property type="project" value="UniProtKB"/>
</dbReference>
<dbReference type="GO" id="GO:0005886">
    <property type="term" value="C:plasma membrane"/>
    <property type="evidence" value="ECO:0000304"/>
    <property type="project" value="Reactome"/>
</dbReference>
<dbReference type="GO" id="GO:0004930">
    <property type="term" value="F:G protein-coupled receptor activity"/>
    <property type="evidence" value="ECO:0007669"/>
    <property type="project" value="UniProtKB-KW"/>
</dbReference>
<dbReference type="GO" id="GO:0005549">
    <property type="term" value="F:odorant binding"/>
    <property type="evidence" value="ECO:0000314"/>
    <property type="project" value="UniProtKB"/>
</dbReference>
<dbReference type="GO" id="GO:0004984">
    <property type="term" value="F:olfactory receptor activity"/>
    <property type="evidence" value="ECO:0000314"/>
    <property type="project" value="UniProtKB"/>
</dbReference>
<dbReference type="GO" id="GO:0050907">
    <property type="term" value="P:detection of chemical stimulus involved in sensory perception"/>
    <property type="evidence" value="ECO:0000314"/>
    <property type="project" value="UniProtKB"/>
</dbReference>
<dbReference type="GO" id="GO:0050911">
    <property type="term" value="P:detection of chemical stimulus involved in sensory perception of smell"/>
    <property type="evidence" value="ECO:0000314"/>
    <property type="project" value="UniProtKB"/>
</dbReference>
<dbReference type="GO" id="GO:0007186">
    <property type="term" value="P:G protein-coupled receptor signaling pathway"/>
    <property type="evidence" value="ECO:0000247"/>
    <property type="project" value="MGI"/>
</dbReference>
<dbReference type="GO" id="GO:0007608">
    <property type="term" value="P:sensory perception of smell"/>
    <property type="evidence" value="ECO:0000247"/>
    <property type="project" value="MGI"/>
</dbReference>
<dbReference type="CDD" id="cd15947">
    <property type="entry name" value="7tmA_OR2B-like"/>
    <property type="match status" value="1"/>
</dbReference>
<dbReference type="FunFam" id="1.20.1070.10:FF:000005">
    <property type="entry name" value="Olfactory receptor"/>
    <property type="match status" value="1"/>
</dbReference>
<dbReference type="Gene3D" id="1.20.1070.10">
    <property type="entry name" value="Rhodopsin 7-helix transmembrane proteins"/>
    <property type="match status" value="1"/>
</dbReference>
<dbReference type="InterPro" id="IPR000276">
    <property type="entry name" value="GPCR_Rhodpsn"/>
</dbReference>
<dbReference type="InterPro" id="IPR017452">
    <property type="entry name" value="GPCR_Rhodpsn_7TM"/>
</dbReference>
<dbReference type="InterPro" id="IPR000725">
    <property type="entry name" value="Olfact_rcpt"/>
</dbReference>
<dbReference type="PANTHER" id="PTHR26453">
    <property type="entry name" value="OLFACTORY RECEPTOR"/>
    <property type="match status" value="1"/>
</dbReference>
<dbReference type="Pfam" id="PF13853">
    <property type="entry name" value="7tm_4"/>
    <property type="match status" value="1"/>
</dbReference>
<dbReference type="PRINTS" id="PR00237">
    <property type="entry name" value="GPCRRHODOPSN"/>
</dbReference>
<dbReference type="PRINTS" id="PR00245">
    <property type="entry name" value="OLFACTORYR"/>
</dbReference>
<dbReference type="SUPFAM" id="SSF81321">
    <property type="entry name" value="Family A G protein-coupled receptor-like"/>
    <property type="match status" value="1"/>
</dbReference>
<dbReference type="PROSITE" id="PS00237">
    <property type="entry name" value="G_PROTEIN_RECEP_F1_1"/>
    <property type="match status" value="1"/>
</dbReference>
<dbReference type="PROSITE" id="PS50262">
    <property type="entry name" value="G_PROTEIN_RECEP_F1_2"/>
    <property type="match status" value="1"/>
</dbReference>
<name>OR2C1_MOUSE</name>
<reference key="1">
    <citation type="journal article" date="1992" name="Proc. Natl. Acad. Sci. U.S.A.">
        <title>Spatial pattern of receptor expression in the olfactory epithelium.</title>
        <authorList>
            <person name="Nef P."/>
            <person name="Hermans-Borgmeyer I."/>
            <person name="Artieres-Pin H."/>
            <person name="Beasley L."/>
            <person name="Dionne V.E."/>
            <person name="Heinemann S.F."/>
        </authorList>
    </citation>
    <scope>NUCLEOTIDE SEQUENCE [GENOMIC DNA]</scope>
    <scope>TISSUE SPECIFICITY</scope>
</reference>
<reference key="2">
    <citation type="journal article" date="2002" name="Hum. Mol. Genet.">
        <title>Different evolutionary processes shaped the mouse and human olfactory receptor gene families.</title>
        <authorList>
            <person name="Young J.M."/>
            <person name="Friedman C."/>
            <person name="Williams E.M."/>
            <person name="Ross J.A."/>
            <person name="Tonnes-Priddy L."/>
            <person name="Trask B.J."/>
        </authorList>
    </citation>
    <scope>NUCLEOTIDE SEQUENCE [GENOMIC DNA]</scope>
</reference>
<reference key="3">
    <citation type="journal article" date="2002" name="Hum. Mol. Genet.">
        <authorList>
            <person name="Young J.M."/>
            <person name="Friedman C."/>
            <person name="Williams E.M."/>
            <person name="Ross J.A."/>
            <person name="Tonnes-Priddy L."/>
            <person name="Trask B.J."/>
        </authorList>
    </citation>
    <scope>ERRATUM OF PUBMED:11875048</scope>
</reference>
<reference key="4">
    <citation type="journal article" date="2002" name="Nat. Neurosci.">
        <title>The olfactory receptor gene superfamily of the mouse.</title>
        <authorList>
            <person name="Zhang X."/>
            <person name="Firestein S."/>
        </authorList>
    </citation>
    <scope>NUCLEOTIDE SEQUENCE [GENOMIC DNA]</scope>
</reference>
<reference key="5">
    <citation type="journal article" date="2003" name="Genome Biol.">
        <title>Odorant receptor expressed sequence tags demonstrate olfactory expression of over 400 genes, extensive alternate splicing and unequal expression levels.</title>
        <authorList>
            <person name="Young J.M."/>
            <person name="Shykind B.M."/>
            <person name="Lane R.P."/>
            <person name="Tonnes-Priddy L."/>
            <person name="Ross J.A."/>
            <person name="Walker M."/>
            <person name="Williams E.M."/>
            <person name="Trask B.J."/>
        </authorList>
    </citation>
    <scope>NUCLEOTIDE SEQUENCE [GENOMIC DNA]</scope>
</reference>
<reference key="6">
    <citation type="journal article" date="2004" name="Genome Res.">
        <title>The status, quality, and expansion of the NIH full-length cDNA project: the Mammalian Gene Collection (MGC).</title>
        <authorList>
            <consortium name="The MGC Project Team"/>
        </authorList>
    </citation>
    <scope>NUCLEOTIDE SEQUENCE [LARGE SCALE MRNA] OF 2-312</scope>
</reference>
<reference key="7">
    <citation type="journal article" date="2004" name="J. Neurosci.">
        <title>Olfactory receptor proteins in axonal processes of chemosensory neurons.</title>
        <authorList>
            <person name="Strotmann J."/>
            <person name="Levai O."/>
            <person name="Fleischer J."/>
            <person name="Schwarzenbacher K."/>
            <person name="Breer H."/>
        </authorList>
    </citation>
    <scope>FUNCTION</scope>
    <scope>SUBCELLULAR LOCATION</scope>
    <scope>TISSUE SPECIFICITY</scope>
</reference>
<reference key="8">
    <citation type="journal article" date="2015" name="Proc. Natl. Acad. Sci. U.S.A.">
        <title>Implausibility of the vibrational theory of olfaction.</title>
        <authorList>
            <person name="Block E."/>
            <person name="Jang S."/>
            <person name="Matsunami H."/>
            <person name="Sekharan S."/>
            <person name="Dethier B."/>
            <person name="Ertem M.Z."/>
            <person name="Gundala S."/>
            <person name="Pan Y."/>
            <person name="Li S."/>
            <person name="Li Z."/>
            <person name="Lodge S.N."/>
            <person name="Ozbil M."/>
            <person name="Jiang H."/>
            <person name="Penalba S.F."/>
            <person name="Batista V.S."/>
            <person name="Zhuang H."/>
        </authorList>
    </citation>
    <scope>FUNCTION</scope>
    <scope>SUBCELLULAR LOCATION</scope>
</reference>
<reference key="9">
    <citation type="journal article" date="2018" name="Chem. Senses">
        <title>A Multispecific Investigation of the Metal Effect in Mammalian Odorant Receptors for Sulfur-containing Compounds.</title>
        <authorList>
            <person name="Zhang R."/>
            <person name="Pan Y."/>
            <person name="Ahmed L."/>
            <person name="Block E."/>
            <person name="Zhang Y."/>
            <person name="Batista V.S."/>
            <person name="Zhuang H."/>
        </authorList>
    </citation>
    <scope>FUNCTION</scope>
    <scope>SUBCELLULAR LOCATION</scope>
</reference>
<accession>P23275</accession>
<accession>Q496W6</accession>
<accession>Q8VFF0</accession>
<protein>
    <recommendedName>
        <fullName evidence="7">Olfactory receptor 2C1</fullName>
    </recommendedName>
    <alternativeName>
        <fullName>Odorant receptor OR3</fullName>
    </alternativeName>
    <alternativeName>
        <fullName>Olfactory receptor 15</fullName>
    </alternativeName>
    <alternativeName>
        <fullName>Olfactory receptor 256-17</fullName>
    </alternativeName>
</protein>
<evidence type="ECO:0000255" key="1"/>
<evidence type="ECO:0000255" key="2">
    <source>
        <dbReference type="PROSITE-ProRule" id="PRU00521"/>
    </source>
</evidence>
<evidence type="ECO:0000269" key="3">
    <source>
    </source>
</evidence>
<evidence type="ECO:0000269" key="4">
    <source>
    </source>
</evidence>
<evidence type="ECO:0000269" key="5">
    <source>
    </source>
</evidence>
<evidence type="ECO:0000269" key="6">
    <source>
    </source>
</evidence>
<evidence type="ECO:0000305" key="7"/>
<evidence type="ECO:0000305" key="8">
    <source>
    </source>
</evidence>
<evidence type="ECO:0000305" key="9">
    <source>
    </source>
</evidence>
<evidence type="ECO:0000312" key="10">
    <source>
        <dbReference type="MGI" id="MGI:106182"/>
    </source>
</evidence>
<sequence length="312" mass="34320">MEVDSNSSSGSFILMGVSDHPHLEIIFFAVILASYLLTLVGNLTIILLSRLDARLHTPMYFFLSNLSSLDLAFTTSSVPQMLKNLWGPDKTISYGGCVTQLYVFLWLGATECILLVVMAFDRYVAVCRPLHYMTVMNPRLCWGLAAISWLGGLGNSVIQSTFTLQLPFCGHRKVDNFLCEVPAMIKLACGDTSLNEAVLNGVCTFFTVVPVSVILVSYCFIAQAVMKIRSVEGRRKAFNTCVSHLVVVFLFYGSAIYGYLLPAKSSNQSQGKFISLFYSVVTPMVNPLIYTLRNKEVKGALGRLLGKGRGAS</sequence>
<comment type="function">
    <text evidence="4 5 6 7">Olfactory receptor that is activated by the binding of organosulfur odorants with thioether groups such as (methylthio)methanetiol (MTMT) (PubMed:29659735). Also binds odorants acetophenone and benzaldehyde (PubMed:25901328). The activity of this receptor is mediated by G proteins which activate adenylyl cyclase (Probable). May be involved in the molecular processes underlying fasciculation and targeting of olfactory axons (PubMed:15342743).</text>
</comment>
<comment type="subcellular location">
    <subcellularLocation>
        <location evidence="4 8 9">Cell membrane</location>
        <topology evidence="1">Multi-pass membrane protein</topology>
    </subcellularLocation>
</comment>
<comment type="tissue specificity">
    <text evidence="3 4">Olfactory epithelium. Present in various subcellular compartments of the olfactory sensory neurons, particularly in the axonal processes and neve terminals.</text>
</comment>
<comment type="similarity">
    <text evidence="2">Belongs to the G-protein coupled receptor 1 family.</text>
</comment>
<proteinExistence type="evidence at transcript level"/>
<organism>
    <name type="scientific">Mus musculus</name>
    <name type="common">Mouse</name>
    <dbReference type="NCBI Taxonomy" id="10090"/>
    <lineage>
        <taxon>Eukaryota</taxon>
        <taxon>Metazoa</taxon>
        <taxon>Chordata</taxon>
        <taxon>Craniata</taxon>
        <taxon>Vertebrata</taxon>
        <taxon>Euteleostomi</taxon>
        <taxon>Mammalia</taxon>
        <taxon>Eutheria</taxon>
        <taxon>Euarchontoglires</taxon>
        <taxon>Glires</taxon>
        <taxon>Rodentia</taxon>
        <taxon>Myomorpha</taxon>
        <taxon>Muroidea</taxon>
        <taxon>Muridae</taxon>
        <taxon>Murinae</taxon>
        <taxon>Mus</taxon>
        <taxon>Mus</taxon>
    </lineage>
</organism>
<keyword id="KW-1003">Cell membrane</keyword>
<keyword id="KW-1015">Disulfide bond</keyword>
<keyword id="KW-0297">G-protein coupled receptor</keyword>
<keyword id="KW-0325">Glycoprotein</keyword>
<keyword id="KW-0472">Membrane</keyword>
<keyword id="KW-0552">Olfaction</keyword>
<keyword id="KW-0675">Receptor</keyword>
<keyword id="KW-1185">Reference proteome</keyword>
<keyword id="KW-0716">Sensory transduction</keyword>
<keyword id="KW-0807">Transducer</keyword>
<keyword id="KW-0812">Transmembrane</keyword>
<keyword id="KW-1133">Transmembrane helix</keyword>
<feature type="chain" id="PRO_0000150813" description="Olfactory receptor 2C1">
    <location>
        <begin position="1"/>
        <end position="312"/>
    </location>
</feature>
<feature type="topological domain" description="Extracellular" evidence="1">
    <location>
        <begin position="1"/>
        <end position="24"/>
    </location>
</feature>
<feature type="transmembrane region" description="Helical; Name=1" evidence="1">
    <location>
        <begin position="25"/>
        <end position="48"/>
    </location>
</feature>
<feature type="topological domain" description="Cytoplasmic" evidence="1">
    <location>
        <begin position="49"/>
        <end position="57"/>
    </location>
</feature>
<feature type="transmembrane region" description="Helical; Name=2" evidence="1">
    <location>
        <begin position="58"/>
        <end position="79"/>
    </location>
</feature>
<feature type="topological domain" description="Extracellular" evidence="1">
    <location>
        <begin position="80"/>
        <end position="100"/>
    </location>
</feature>
<feature type="transmembrane region" description="Helical; Name=3" evidence="1">
    <location>
        <begin position="101"/>
        <end position="120"/>
    </location>
</feature>
<feature type="topological domain" description="Cytoplasmic" evidence="1">
    <location>
        <begin position="121"/>
        <end position="139"/>
    </location>
</feature>
<feature type="transmembrane region" description="Helical; Name=4" evidence="1">
    <location>
        <begin position="140"/>
        <end position="160"/>
    </location>
</feature>
<feature type="topological domain" description="Extracellular" evidence="1">
    <location>
        <begin position="161"/>
        <end position="200"/>
    </location>
</feature>
<feature type="transmembrane region" description="Helical; Name=5" evidence="1">
    <location>
        <begin position="201"/>
        <end position="222"/>
    </location>
</feature>
<feature type="topological domain" description="Cytoplasmic" evidence="1">
    <location>
        <begin position="223"/>
        <end position="236"/>
    </location>
</feature>
<feature type="transmembrane region" description="Helical; Name=6" evidence="1">
    <location>
        <begin position="237"/>
        <end position="261"/>
    </location>
</feature>
<feature type="topological domain" description="Extracellular" evidence="1">
    <location>
        <begin position="262"/>
        <end position="272"/>
    </location>
</feature>
<feature type="transmembrane region" description="Helical; Name=7" evidence="1">
    <location>
        <begin position="273"/>
        <end position="292"/>
    </location>
</feature>
<feature type="topological domain" description="Cytoplasmic" evidence="1">
    <location>
        <begin position="293"/>
        <end position="312"/>
    </location>
</feature>
<feature type="glycosylation site" description="N-linked (GlcNAc...) asparagine" evidence="1">
    <location>
        <position position="6"/>
    </location>
</feature>
<feature type="disulfide bond" evidence="2">
    <location>
        <begin position="97"/>
        <end position="189"/>
    </location>
</feature>
<feature type="sequence conflict" description="In Ref. 1; AAA39862." evidence="7" ref="1">
    <original>S</original>
    <variation>T</variation>
    <location>
        <position position="11"/>
    </location>
</feature>